<gene>
    <name type="primary">Catsper2</name>
</gene>
<feature type="chain" id="PRO_0000295678" description="Cation channel sperm-associated protein 2">
    <location>
        <begin position="1"/>
        <end position="584"/>
    </location>
</feature>
<feature type="topological domain" description="Cytoplasmic" evidence="1">
    <location>
        <begin position="1"/>
        <end position="106"/>
    </location>
</feature>
<feature type="transmembrane region" description="Helical; Name=Segment S1" evidence="1">
    <location>
        <begin position="107"/>
        <end position="129"/>
    </location>
</feature>
<feature type="topological domain" description="Extracellular" evidence="1">
    <location>
        <begin position="130"/>
        <end position="138"/>
    </location>
</feature>
<feature type="transmembrane region" description="Helical; Name=Segment S2" evidence="1">
    <location>
        <begin position="139"/>
        <end position="164"/>
    </location>
</feature>
<feature type="topological domain" description="Cytoplasmic" evidence="1">
    <location>
        <begin position="165"/>
        <end position="173"/>
    </location>
</feature>
<feature type="transmembrane region" description="Helical; Name=Segment S3" evidence="1">
    <location>
        <begin position="174"/>
        <end position="198"/>
    </location>
</feature>
<feature type="topological domain" description="Extracellular" evidence="1">
    <location>
        <begin position="199"/>
        <end position="201"/>
    </location>
</feature>
<feature type="transmembrane region" description="Helical; Name=Segment S4" evidence="1">
    <location>
        <begin position="202"/>
        <end position="220"/>
    </location>
</feature>
<feature type="topological domain" description="Cytoplasmic" evidence="1">
    <location>
        <begin position="221"/>
        <end position="237"/>
    </location>
</feature>
<feature type="transmembrane region" description="Helical; Name=Segment S5" evidence="1">
    <location>
        <begin position="238"/>
        <end position="260"/>
    </location>
</feature>
<feature type="topological domain" description="Extracellular" evidence="1">
    <location>
        <begin position="261"/>
        <end position="279"/>
    </location>
</feature>
<feature type="intramembrane region" description="Helical; Pore-forming" evidence="1">
    <location>
        <begin position="280"/>
        <end position="292"/>
    </location>
</feature>
<feature type="topological domain" description="Extracellular" evidence="1">
    <location>
        <begin position="293"/>
        <end position="312"/>
    </location>
</feature>
<feature type="transmembrane region" description="Helical; Name=Segment S6" evidence="1">
    <location>
        <begin position="313"/>
        <end position="339"/>
    </location>
</feature>
<feature type="topological domain" description="Cytoplasmic" evidence="1">
    <location>
        <begin position="340"/>
        <end position="584"/>
    </location>
</feature>
<feature type="region of interest" description="Disordered" evidence="4">
    <location>
        <begin position="376"/>
        <end position="460"/>
    </location>
</feature>
<feature type="region of interest" description="Disordered" evidence="4">
    <location>
        <begin position="480"/>
        <end position="510"/>
    </location>
</feature>
<feature type="compositionally biased region" description="Polar residues" evidence="4">
    <location>
        <begin position="376"/>
        <end position="386"/>
    </location>
</feature>
<feature type="compositionally biased region" description="Acidic residues" evidence="4">
    <location>
        <begin position="390"/>
        <end position="418"/>
    </location>
</feature>
<feature type="compositionally biased region" description="Acidic residues" evidence="4">
    <location>
        <begin position="426"/>
        <end position="443"/>
    </location>
</feature>
<feature type="compositionally biased region" description="Basic and acidic residues" evidence="4">
    <location>
        <begin position="444"/>
        <end position="460"/>
    </location>
</feature>
<feature type="compositionally biased region" description="Basic and acidic residues" evidence="4">
    <location>
        <begin position="483"/>
        <end position="496"/>
    </location>
</feature>
<dbReference type="EMBL" id="BC079422">
    <property type="protein sequence ID" value="AAH79422.1"/>
    <property type="molecule type" value="mRNA"/>
</dbReference>
<dbReference type="RefSeq" id="NP_001012220.1">
    <property type="nucleotide sequence ID" value="NM_001012220.1"/>
</dbReference>
<dbReference type="RefSeq" id="XP_008760409.1">
    <property type="nucleotide sequence ID" value="XM_008762187.4"/>
</dbReference>
<dbReference type="RefSeq" id="XP_017447438.1">
    <property type="nucleotide sequence ID" value="XM_017591949.3"/>
</dbReference>
<dbReference type="SMR" id="Q6AXP6"/>
<dbReference type="FunCoup" id="Q6AXP6">
    <property type="interactions" value="10"/>
</dbReference>
<dbReference type="STRING" id="10116.ENSRNOP00000038712"/>
<dbReference type="PhosphoSitePlus" id="Q6AXP6"/>
<dbReference type="PaxDb" id="10116-ENSRNOP00000038712"/>
<dbReference type="Ensembl" id="ENSRNOT00000030019.4">
    <property type="protein sequence ID" value="ENSRNOP00000038712.3"/>
    <property type="gene ID" value="ENSRNOG00000023064.4"/>
</dbReference>
<dbReference type="GeneID" id="366174"/>
<dbReference type="KEGG" id="rno:366174"/>
<dbReference type="UCSC" id="RGD:1307620">
    <property type="organism name" value="rat"/>
</dbReference>
<dbReference type="AGR" id="RGD:1307620"/>
<dbReference type="CTD" id="117155"/>
<dbReference type="RGD" id="1307620">
    <property type="gene designation" value="Catsper2"/>
</dbReference>
<dbReference type="eggNOG" id="KOG2301">
    <property type="taxonomic scope" value="Eukaryota"/>
</dbReference>
<dbReference type="GeneTree" id="ENSGT00910000144338"/>
<dbReference type="HOGENOM" id="CLU_038828_0_0_1"/>
<dbReference type="InParanoid" id="Q6AXP6"/>
<dbReference type="OMA" id="QVVWPRD"/>
<dbReference type="OrthoDB" id="87014at9989"/>
<dbReference type="PhylomeDB" id="Q6AXP6"/>
<dbReference type="TreeFam" id="TF343585"/>
<dbReference type="Reactome" id="R-RNO-1300642">
    <property type="pathway name" value="Sperm Motility And Taxes"/>
</dbReference>
<dbReference type="PRO" id="PR:Q6AXP6"/>
<dbReference type="Proteomes" id="UP000002494">
    <property type="component" value="Chromosome 3"/>
</dbReference>
<dbReference type="Bgee" id="ENSRNOG00000023064">
    <property type="expression patterns" value="Expressed in testis and 20 other cell types or tissues"/>
</dbReference>
<dbReference type="GO" id="GO:0036128">
    <property type="term" value="C:CatSper complex"/>
    <property type="evidence" value="ECO:0000250"/>
    <property type="project" value="UniProtKB"/>
</dbReference>
<dbReference type="GO" id="GO:0036126">
    <property type="term" value="C:sperm flagellum"/>
    <property type="evidence" value="ECO:0000266"/>
    <property type="project" value="RGD"/>
</dbReference>
<dbReference type="GO" id="GO:0005227">
    <property type="term" value="F:calcium-activated cation channel activity"/>
    <property type="evidence" value="ECO:0007669"/>
    <property type="project" value="InterPro"/>
</dbReference>
<dbReference type="GO" id="GO:0005245">
    <property type="term" value="F:voltage-gated calcium channel activity"/>
    <property type="evidence" value="ECO:0000250"/>
    <property type="project" value="UniProtKB"/>
</dbReference>
<dbReference type="GO" id="GO:0006816">
    <property type="term" value="P:calcium ion transport"/>
    <property type="evidence" value="ECO:0000250"/>
    <property type="project" value="UniProtKB"/>
</dbReference>
<dbReference type="GO" id="GO:0009566">
    <property type="term" value="P:fertilization"/>
    <property type="evidence" value="ECO:0000266"/>
    <property type="project" value="RGD"/>
</dbReference>
<dbReference type="GO" id="GO:0030317">
    <property type="term" value="P:flagellated sperm motility"/>
    <property type="evidence" value="ECO:0000266"/>
    <property type="project" value="RGD"/>
</dbReference>
<dbReference type="GO" id="GO:0048240">
    <property type="term" value="P:sperm capacitation"/>
    <property type="evidence" value="ECO:0000266"/>
    <property type="project" value="RGD"/>
</dbReference>
<dbReference type="FunFam" id="1.20.120.350:FF:000084">
    <property type="entry name" value="Cation channel sperm associated 2"/>
    <property type="match status" value="1"/>
</dbReference>
<dbReference type="FunFam" id="1.10.287.70:FF:000115">
    <property type="entry name" value="Cation channel sperm-associated protein 2"/>
    <property type="match status" value="1"/>
</dbReference>
<dbReference type="Gene3D" id="1.10.287.70">
    <property type="match status" value="1"/>
</dbReference>
<dbReference type="Gene3D" id="1.20.120.350">
    <property type="entry name" value="Voltage-gated potassium channels. Chain C"/>
    <property type="match status" value="1"/>
</dbReference>
<dbReference type="InterPro" id="IPR028747">
    <property type="entry name" value="CatSper2"/>
</dbReference>
<dbReference type="InterPro" id="IPR005821">
    <property type="entry name" value="Ion_trans_dom"/>
</dbReference>
<dbReference type="InterPro" id="IPR027359">
    <property type="entry name" value="Volt_channel_dom_sf"/>
</dbReference>
<dbReference type="PANTHER" id="PTHR46923">
    <property type="entry name" value="CATION CHANNEL SPERM-ASSOCIATED PROTEIN 2"/>
    <property type="match status" value="1"/>
</dbReference>
<dbReference type="PANTHER" id="PTHR46923:SF1">
    <property type="entry name" value="CATION CHANNEL SPERM-ASSOCIATED PROTEIN 2"/>
    <property type="match status" value="1"/>
</dbReference>
<dbReference type="Pfam" id="PF00520">
    <property type="entry name" value="Ion_trans"/>
    <property type="match status" value="1"/>
</dbReference>
<dbReference type="SUPFAM" id="SSF81324">
    <property type="entry name" value="Voltage-gated potassium channels"/>
    <property type="match status" value="1"/>
</dbReference>
<name>CTSR2_RAT</name>
<evidence type="ECO:0000250" key="1">
    <source>
        <dbReference type="UniProtKB" id="A2ARP9"/>
    </source>
</evidence>
<evidence type="ECO:0000250" key="2">
    <source>
        <dbReference type="UniProtKB" id="Q91ZR5"/>
    </source>
</evidence>
<evidence type="ECO:0000250" key="3">
    <source>
        <dbReference type="UniProtKB" id="Q96P56"/>
    </source>
</evidence>
<evidence type="ECO:0000256" key="4">
    <source>
        <dbReference type="SAM" id="MobiDB-lite"/>
    </source>
</evidence>
<evidence type="ECO:0000305" key="5"/>
<reference key="1">
    <citation type="journal article" date="2004" name="Genome Res.">
        <title>The status, quality, and expansion of the NIH full-length cDNA project: the Mammalian Gene Collection (MGC).</title>
        <authorList>
            <consortium name="The MGC Project Team"/>
        </authorList>
    </citation>
    <scope>NUCLEOTIDE SEQUENCE [LARGE SCALE MRNA]</scope>
    <source>
        <tissue>Testis</tissue>
    </source>
</reference>
<reference key="2">
    <citation type="journal article" date="2001" name="Proc. Natl. Acad. Sci. U.S.A.">
        <title>A voltage-gated ion channel expressed specifically in spermatozoa.</title>
        <authorList>
            <person name="Quill T.A."/>
            <person name="Ren D."/>
            <person name="Clapham D.E."/>
            <person name="Garbers D.L."/>
        </authorList>
    </citation>
    <scope>TISSUE SPECIFICITY</scope>
</reference>
<protein>
    <recommendedName>
        <fullName>Cation channel sperm-associated protein 2</fullName>
        <shortName>CatSper2</shortName>
    </recommendedName>
</protein>
<comment type="function">
    <text evidence="1">Pore-forming subunit of the CatSper complex, a sperm-specific voltage-gated calcium channel that plays a central role in sperm cell hyperactivation. Controls calcium entry to mediate the hyperactivated motility, a step needed for sperm motility which is essential late in the preparation of sperm for fertilization.</text>
</comment>
<comment type="catalytic activity">
    <reaction evidence="3">
        <text>Ca(2+)(in) = Ca(2+)(out)</text>
        <dbReference type="Rhea" id="RHEA:29671"/>
        <dbReference type="ChEBI" id="CHEBI:29108"/>
    </reaction>
</comment>
<comment type="activity regulation">
    <text evidence="3">Activated by intracellular alkalinization.</text>
</comment>
<comment type="subunit">
    <text evidence="1 2 3">Component of the CatSper complex or CatSpermasome composed of the core pore-forming members CATSPER1, CATSPER2, CATSPER3 and CATSPER4 as well as auxiliary members CATSPERB, CATSPERG, CATSPERD, CATSPERE, CATSPERZ, C2CD6/CATSPERT, SLCO6C1, TMEM249, TMEM262 and EFCAB9 (By similarity). HSPA1 may be an additional auxiliary complex member (By similarity). The core complex members CATSPER1, CATSPER2, CATSPER3 and CATSPER4 form a heterotetrameric channel (By similarity). The auxiliary CATSPERB, CATSPERG, CATSPERD and CATSPERE subunits form a pavilion-like structure over the pore which stabilizes the complex through interactions with CATSPER4, CATSPER3, CATSPER1 and CATSPER2 respectively (By similarity). SLCO6C1 interacts with CATSPERE and TMEM262/CATSPERH interacts with CATSPERB, further stabilizing the complex. C2CD6/CATSPERT interacts at least with CATSPERD and is required for targeting the CatSper complex in the flagellar membrane (By similarity). Interacts with Ca(v)3.3/CACNA1I, leading to suppression of T-type calcium channel activity (By similarity).</text>
</comment>
<comment type="subcellular location">
    <subcellularLocation>
        <location evidence="1">Cell projection</location>
        <location evidence="1">Cilium</location>
        <location evidence="1">Flagellum membrane</location>
        <topology evidence="1">Multi-pass membrane protein</topology>
    </subcellularLocation>
</comment>
<comment type="similarity">
    <text evidence="5">Belongs to the cation channel sperm-associated (TC 1.A.1.19) family.</text>
</comment>
<proteinExistence type="evidence at transcript level"/>
<organism>
    <name type="scientific">Rattus norvegicus</name>
    <name type="common">Rat</name>
    <dbReference type="NCBI Taxonomy" id="10116"/>
    <lineage>
        <taxon>Eukaryota</taxon>
        <taxon>Metazoa</taxon>
        <taxon>Chordata</taxon>
        <taxon>Craniata</taxon>
        <taxon>Vertebrata</taxon>
        <taxon>Euteleostomi</taxon>
        <taxon>Mammalia</taxon>
        <taxon>Eutheria</taxon>
        <taxon>Euarchontoglires</taxon>
        <taxon>Glires</taxon>
        <taxon>Rodentia</taxon>
        <taxon>Myomorpha</taxon>
        <taxon>Muroidea</taxon>
        <taxon>Muridae</taxon>
        <taxon>Murinae</taxon>
        <taxon>Rattus</taxon>
    </lineage>
</organism>
<keyword id="KW-0106">Calcium</keyword>
<keyword id="KW-0107">Calcium channel</keyword>
<keyword id="KW-0109">Calcium transport</keyword>
<keyword id="KW-1003">Cell membrane</keyword>
<keyword id="KW-0966">Cell projection</keyword>
<keyword id="KW-0969">Cilium</keyword>
<keyword id="KW-0217">Developmental protein</keyword>
<keyword id="KW-0221">Differentiation</keyword>
<keyword id="KW-0282">Flagellum</keyword>
<keyword id="KW-0407">Ion channel</keyword>
<keyword id="KW-0406">Ion transport</keyword>
<keyword id="KW-0472">Membrane</keyword>
<keyword id="KW-1185">Reference proteome</keyword>
<keyword id="KW-0744">Spermatogenesis</keyword>
<keyword id="KW-0812">Transmembrane</keyword>
<keyword id="KW-1133">Transmembrane helix</keyword>
<keyword id="KW-0813">Transport</keyword>
<keyword id="KW-0851">Voltage-gated channel</keyword>
<accession>Q6AXP6</accession>
<sequence length="584" mass="68266">MAHERGHLQLPRADAIRSKLIDTFSLIEHLQGLSQAVPRHTLREILDPACQKKLMLGDQEQLVRFSIRARRMGHITHAQRLLSRLRVRCGGRPPLSLWAGWVLDSSIFSNFIISLIFLNTFVLMVEIELMNSTNTSLWPLKLALEVTDWFILLSFIVEILLMWLASFFLFWKNAWSVFDFVVTMLSLLPEFVVLIGVSADSVWLQLLRVSRVLRSLKLFARFPQIKVILLALVRALKSMTFLLMLLLIFFYVFAVAGVYFFKEYSRSTIENLEYNMFFSDLLNSLVTVFILFTLDHWYAVLQDVWKVPEASRVFSSIYVILWLLLGSIIFRNIIVAMMVTNFQNIRNELHEEMTHLEVQYKADIFKRRIIQRRQQSESLRGTSQGKVSEDITETSEATDEEKSEAEESEEEKSEEEKSDVEKSDEEKNDEEKSDEEENDEEKSDVEKSDEEKNDEEKGYTEKVYSGRTFVERSYAERSFAGKAENEKVQKELKEKAYPGSPPNSSSHDEAFAADDTYLENLDWETLVHENLPGLMDMDQDDRVVWPRDSLFRYFELLESLQYNLEERKRLQEFAVQALMNFEDK</sequence>